<reference key="1">
    <citation type="submission" date="2006-08" db="EMBL/GenBank/DDBJ databases">
        <title>Complete sequence of Maricaulis maris MCS10.</title>
        <authorList>
            <consortium name="US DOE Joint Genome Institute"/>
            <person name="Copeland A."/>
            <person name="Lucas S."/>
            <person name="Lapidus A."/>
            <person name="Barry K."/>
            <person name="Detter J.C."/>
            <person name="Glavina del Rio T."/>
            <person name="Hammon N."/>
            <person name="Israni S."/>
            <person name="Dalin E."/>
            <person name="Tice H."/>
            <person name="Pitluck S."/>
            <person name="Saunders E."/>
            <person name="Brettin T."/>
            <person name="Bruce D."/>
            <person name="Han C."/>
            <person name="Tapia R."/>
            <person name="Gilna P."/>
            <person name="Schmutz J."/>
            <person name="Larimer F."/>
            <person name="Land M."/>
            <person name="Hauser L."/>
            <person name="Kyrpides N."/>
            <person name="Mikhailova N."/>
            <person name="Viollier P."/>
            <person name="Stephens C."/>
            <person name="Richardson P."/>
        </authorList>
    </citation>
    <scope>NUCLEOTIDE SEQUENCE [LARGE SCALE GENOMIC DNA]</scope>
    <source>
        <strain>MCS10</strain>
    </source>
</reference>
<comment type="function">
    <text evidence="1">Catalyzes the last two steps in the biosynthesis of 5-methylaminomethyl-2-thiouridine (mnm(5)s(2)U) at the wobble position (U34) in tRNA. Catalyzes the FAD-dependent demodification of cmnm(5)s(2)U34 to nm(5)s(2)U34, followed by the transfer of a methyl group from S-adenosyl-L-methionine to nm(5)s(2)U34, to form mnm(5)s(2)U34.</text>
</comment>
<comment type="catalytic activity">
    <reaction evidence="1">
        <text>5-aminomethyl-2-thiouridine(34) in tRNA + S-adenosyl-L-methionine = 5-methylaminomethyl-2-thiouridine(34) in tRNA + S-adenosyl-L-homocysteine + H(+)</text>
        <dbReference type="Rhea" id="RHEA:19569"/>
        <dbReference type="Rhea" id="RHEA-COMP:10195"/>
        <dbReference type="Rhea" id="RHEA-COMP:10197"/>
        <dbReference type="ChEBI" id="CHEBI:15378"/>
        <dbReference type="ChEBI" id="CHEBI:57856"/>
        <dbReference type="ChEBI" id="CHEBI:59789"/>
        <dbReference type="ChEBI" id="CHEBI:74454"/>
        <dbReference type="ChEBI" id="CHEBI:74455"/>
        <dbReference type="EC" id="2.1.1.61"/>
    </reaction>
</comment>
<comment type="cofactor">
    <cofactor evidence="1">
        <name>FAD</name>
        <dbReference type="ChEBI" id="CHEBI:57692"/>
    </cofactor>
</comment>
<comment type="subcellular location">
    <subcellularLocation>
        <location evidence="1">Cytoplasm</location>
    </subcellularLocation>
</comment>
<comment type="similarity">
    <text evidence="1">In the N-terminal section; belongs to the methyltransferase superfamily. tRNA (mnm(5)s(2)U34)-methyltransferase family.</text>
</comment>
<comment type="similarity">
    <text evidence="1">In the C-terminal section; belongs to the DAO family.</text>
</comment>
<keyword id="KW-0963">Cytoplasm</keyword>
<keyword id="KW-0274">FAD</keyword>
<keyword id="KW-0285">Flavoprotein</keyword>
<keyword id="KW-0489">Methyltransferase</keyword>
<keyword id="KW-0511">Multifunctional enzyme</keyword>
<keyword id="KW-0560">Oxidoreductase</keyword>
<keyword id="KW-1185">Reference proteome</keyword>
<keyword id="KW-0949">S-adenosyl-L-methionine</keyword>
<keyword id="KW-0808">Transferase</keyword>
<keyword id="KW-0819">tRNA processing</keyword>
<sequence>MTPDGLYCDPAELDWSQPSGPRARAYGDVYFSAEDGLEEARAVFLRGCGLPEAWTGRRHYVVGELGFGTGLNALALWQLWRQTRPTDGWLDFVTVEKHPLDRDAAARAFAAWPELSDLASRLLTQWPSRLRGPQRLVFPEDGFAITIFQDEVEAALSQMTRPVDAWFLDGFAPDRNAAMWSQAVFNRLGELSVPGTRVGTFTVAGFVRRGLAEAGFDVAKRPGFGRKRERLEAVWPGEAVDGSLANVDGPVAVLGAGIAGASLVHALRRRGIETVLIDAHGVASGASGAPAGLLTPRLEKADRPHVRATLAAFDFARRLYDGRPGFHAEPVRRLPKDEREAERFAILADWMPDHLDWTGEALVMPGAGRFEPARLVADLVADAQCHRARIGRVEPLGSGIGLYDDAGECRFEVAHLVIAAGAGARRFYPDLQPSAGQLAVFDGAPPDMPTAWGNYACAAPGGVLVGATHDRGDQVGPEDVAEAGFRASVAERMPGLALGPVQGRWQGVRAATPDRLPVAGRLSERVSILAGLGSRGFAHAPLLAEDLASELMGGVPALAQTGREAMAPGRFAERRSRRAGQGAAG</sequence>
<name>MNMC_MARMM</name>
<evidence type="ECO:0000255" key="1">
    <source>
        <dbReference type="HAMAP-Rule" id="MF_01102"/>
    </source>
</evidence>
<evidence type="ECO:0000256" key="2">
    <source>
        <dbReference type="SAM" id="MobiDB-lite"/>
    </source>
</evidence>
<protein>
    <recommendedName>
        <fullName evidence="1">tRNA 5-methylaminomethyl-2-thiouridine biosynthesis bifunctional protein MnmC</fullName>
        <shortName evidence="1">tRNA mnm(5)s(2)U biosynthesis bifunctional protein</shortName>
    </recommendedName>
    <domain>
        <recommendedName>
            <fullName evidence="1">tRNA (mnm(5)s(2)U34)-methyltransferase</fullName>
            <ecNumber evidence="1">2.1.1.61</ecNumber>
        </recommendedName>
    </domain>
    <domain>
        <recommendedName>
            <fullName evidence="1">FAD-dependent cmnm(5)s(2)U34 oxidoreductase</fullName>
            <ecNumber evidence="1">1.5.-.-</ecNumber>
        </recommendedName>
    </domain>
</protein>
<organism>
    <name type="scientific">Maricaulis maris (strain MCS10)</name>
    <name type="common">Caulobacter maris</name>
    <dbReference type="NCBI Taxonomy" id="394221"/>
    <lineage>
        <taxon>Bacteria</taxon>
        <taxon>Pseudomonadati</taxon>
        <taxon>Pseudomonadota</taxon>
        <taxon>Alphaproteobacteria</taxon>
        <taxon>Maricaulales</taxon>
        <taxon>Maricaulaceae</taxon>
        <taxon>Maricaulis</taxon>
    </lineage>
</organism>
<proteinExistence type="inferred from homology"/>
<dbReference type="EC" id="2.1.1.61" evidence="1"/>
<dbReference type="EC" id="1.5.-.-" evidence="1"/>
<dbReference type="EMBL" id="CP000449">
    <property type="protein sequence ID" value="ABI66803.1"/>
    <property type="molecule type" value="Genomic_DNA"/>
</dbReference>
<dbReference type="RefSeq" id="WP_011644447.1">
    <property type="nucleotide sequence ID" value="NC_008347.1"/>
</dbReference>
<dbReference type="SMR" id="Q0ALP0"/>
<dbReference type="STRING" id="394221.Mmar10_2517"/>
<dbReference type="KEGG" id="mmr:Mmar10_2517"/>
<dbReference type="eggNOG" id="COG0665">
    <property type="taxonomic scope" value="Bacteria"/>
</dbReference>
<dbReference type="eggNOG" id="COG4121">
    <property type="taxonomic scope" value="Bacteria"/>
</dbReference>
<dbReference type="HOGENOM" id="CLU_022427_1_1_5"/>
<dbReference type="OrthoDB" id="9786494at2"/>
<dbReference type="Proteomes" id="UP000001964">
    <property type="component" value="Chromosome"/>
</dbReference>
<dbReference type="GO" id="GO:0005737">
    <property type="term" value="C:cytoplasm"/>
    <property type="evidence" value="ECO:0007669"/>
    <property type="project" value="UniProtKB-SubCell"/>
</dbReference>
<dbReference type="GO" id="GO:0050660">
    <property type="term" value="F:flavin adenine dinucleotide binding"/>
    <property type="evidence" value="ECO:0007669"/>
    <property type="project" value="UniProtKB-UniRule"/>
</dbReference>
<dbReference type="GO" id="GO:0016645">
    <property type="term" value="F:oxidoreductase activity, acting on the CH-NH group of donors"/>
    <property type="evidence" value="ECO:0007669"/>
    <property type="project" value="InterPro"/>
</dbReference>
<dbReference type="GO" id="GO:0004808">
    <property type="term" value="F:tRNA (5-methylaminomethyl-2-thiouridylate)(34)-methyltransferase activity"/>
    <property type="evidence" value="ECO:0007669"/>
    <property type="project" value="UniProtKB-EC"/>
</dbReference>
<dbReference type="GO" id="GO:0032259">
    <property type="term" value="P:methylation"/>
    <property type="evidence" value="ECO:0007669"/>
    <property type="project" value="UniProtKB-KW"/>
</dbReference>
<dbReference type="GO" id="GO:0002097">
    <property type="term" value="P:tRNA wobble base modification"/>
    <property type="evidence" value="ECO:0007669"/>
    <property type="project" value="UniProtKB-UniRule"/>
</dbReference>
<dbReference type="Gene3D" id="3.30.9.10">
    <property type="entry name" value="D-Amino Acid Oxidase, subunit A, domain 2"/>
    <property type="match status" value="1"/>
</dbReference>
<dbReference type="Gene3D" id="3.50.50.60">
    <property type="entry name" value="FAD/NAD(P)-binding domain"/>
    <property type="match status" value="1"/>
</dbReference>
<dbReference type="Gene3D" id="3.40.50.150">
    <property type="entry name" value="Vaccinia Virus protein VP39"/>
    <property type="match status" value="1"/>
</dbReference>
<dbReference type="HAMAP" id="MF_01102">
    <property type="entry name" value="MnmC"/>
    <property type="match status" value="1"/>
</dbReference>
<dbReference type="InterPro" id="IPR006076">
    <property type="entry name" value="FAD-dep_OxRdtase"/>
</dbReference>
<dbReference type="InterPro" id="IPR036188">
    <property type="entry name" value="FAD/NAD-bd_sf"/>
</dbReference>
<dbReference type="InterPro" id="IPR008471">
    <property type="entry name" value="MnmC-like_methylTransf"/>
</dbReference>
<dbReference type="InterPro" id="IPR029063">
    <property type="entry name" value="SAM-dependent_MTases_sf"/>
</dbReference>
<dbReference type="InterPro" id="IPR023032">
    <property type="entry name" value="tRNA_MAMT_biosynth_bifunc_MnmC"/>
</dbReference>
<dbReference type="InterPro" id="IPR047785">
    <property type="entry name" value="tRNA_MNMC2"/>
</dbReference>
<dbReference type="NCBIfam" id="NF033855">
    <property type="entry name" value="tRNA_MNMC2"/>
    <property type="match status" value="1"/>
</dbReference>
<dbReference type="PANTHER" id="PTHR13847">
    <property type="entry name" value="SARCOSINE DEHYDROGENASE-RELATED"/>
    <property type="match status" value="1"/>
</dbReference>
<dbReference type="PANTHER" id="PTHR13847:SF283">
    <property type="entry name" value="TRNA 5-METHYLAMINOMETHYL-2-THIOURIDINE BIOSYNTHESIS BIFUNCTIONAL PROTEIN MNMC"/>
    <property type="match status" value="1"/>
</dbReference>
<dbReference type="Pfam" id="PF01266">
    <property type="entry name" value="DAO"/>
    <property type="match status" value="1"/>
</dbReference>
<dbReference type="Pfam" id="PF05430">
    <property type="entry name" value="Methyltransf_30"/>
    <property type="match status" value="1"/>
</dbReference>
<dbReference type="SUPFAM" id="SSF51971">
    <property type="entry name" value="Nucleotide-binding domain"/>
    <property type="match status" value="1"/>
</dbReference>
<feature type="chain" id="PRO_0000348000" description="tRNA 5-methylaminomethyl-2-thiouridine biosynthesis bifunctional protein MnmC">
    <location>
        <begin position="1"/>
        <end position="585"/>
    </location>
</feature>
<feature type="region of interest" description="tRNA (mnm(5)s(2)U34)-methyltransferase">
    <location>
        <begin position="1"/>
        <end position="236"/>
    </location>
</feature>
<feature type="region of interest" description="FAD-dependent cmnm(5)s(2)U34 oxidoreductase">
    <location>
        <begin position="254"/>
        <end position="585"/>
    </location>
</feature>
<feature type="region of interest" description="Disordered" evidence="2">
    <location>
        <begin position="564"/>
        <end position="585"/>
    </location>
</feature>
<gene>
    <name evidence="1" type="primary">mnmC</name>
    <name type="ordered locus">Mmar10_2517</name>
</gene>
<accession>Q0ALP0</accession>